<name>CU136_HUMAN</name>
<feature type="chain" id="PRO_0000311264" description="Putative uncharacterized protein encoded by LINC00322">
    <location>
        <begin position="1"/>
        <end position="302"/>
    </location>
</feature>
<feature type="region of interest" description="Disordered" evidence="1">
    <location>
        <begin position="15"/>
        <end position="34"/>
    </location>
</feature>
<feature type="region of interest" description="Disordered" evidence="1">
    <location>
        <begin position="143"/>
        <end position="195"/>
    </location>
</feature>
<feature type="region of interest" description="Disordered" evidence="1">
    <location>
        <begin position="221"/>
        <end position="246"/>
    </location>
</feature>
<feature type="compositionally biased region" description="Basic and acidic residues" evidence="1">
    <location>
        <begin position="172"/>
        <end position="189"/>
    </location>
</feature>
<feature type="sequence variant" id="VAR_050931" description="In dbSNP:rs564352.">
    <original>L</original>
    <variation>F</variation>
    <location>
        <position position="116"/>
    </location>
</feature>
<feature type="sequence variant" id="VAR_050932" description="In dbSNP:rs2838262.">
    <original>A</original>
    <variation>T</variation>
    <location>
        <position position="149"/>
    </location>
</feature>
<organism>
    <name type="scientific">Homo sapiens</name>
    <name type="common">Human</name>
    <dbReference type="NCBI Taxonomy" id="9606"/>
    <lineage>
        <taxon>Eukaryota</taxon>
        <taxon>Metazoa</taxon>
        <taxon>Chordata</taxon>
        <taxon>Craniata</taxon>
        <taxon>Vertebrata</taxon>
        <taxon>Euteleostomi</taxon>
        <taxon>Mammalia</taxon>
        <taxon>Eutheria</taxon>
        <taxon>Euarchontoglires</taxon>
        <taxon>Primates</taxon>
        <taxon>Haplorrhini</taxon>
        <taxon>Catarrhini</taxon>
        <taxon>Hominidae</taxon>
        <taxon>Homo</taxon>
    </lineage>
</organism>
<sequence length="302" mass="32374">MALLITPAGVATVNRHSTIPSDTHTSREKPRFHKPCRNDLESLLSEGRLDTSVQTPCPQHPHTQLSCEPQPLEHSSCLSTCLAGCFLPVPSSPHTHPLLPGSRWLPPPLALLMGTLSPGLAVKPSWVPRFPLLARQSPATSVGMPLSAATQPGSVGRLHFPKLRSSSPFSGHSDENKATGQGRENRDQPQRPSHLCECPEAAKQSATNGVAETNRSVFPLGSEARSLSLRRQESQPHSGSSRRESVSCSPSFWCCWQPLAFLTCGCAAPISVPGVTRPSPRPCCVSPPLVRLQSLGLGPTQI</sequence>
<reference key="1">
    <citation type="journal article" date="2004" name="Nat. Genet.">
        <title>Complete sequencing and characterization of 21,243 full-length human cDNAs.</title>
        <authorList>
            <person name="Ota T."/>
            <person name="Suzuki Y."/>
            <person name="Nishikawa T."/>
            <person name="Otsuki T."/>
            <person name="Sugiyama T."/>
            <person name="Irie R."/>
            <person name="Wakamatsu A."/>
            <person name="Hayashi K."/>
            <person name="Sato H."/>
            <person name="Nagai K."/>
            <person name="Kimura K."/>
            <person name="Makita H."/>
            <person name="Sekine M."/>
            <person name="Obayashi M."/>
            <person name="Nishi T."/>
            <person name="Shibahara T."/>
            <person name="Tanaka T."/>
            <person name="Ishii S."/>
            <person name="Yamamoto J."/>
            <person name="Saito K."/>
            <person name="Kawai Y."/>
            <person name="Isono Y."/>
            <person name="Nakamura Y."/>
            <person name="Nagahari K."/>
            <person name="Murakami K."/>
            <person name="Yasuda T."/>
            <person name="Iwayanagi T."/>
            <person name="Wagatsuma M."/>
            <person name="Shiratori A."/>
            <person name="Sudo H."/>
            <person name="Hosoiri T."/>
            <person name="Kaku Y."/>
            <person name="Kodaira H."/>
            <person name="Kondo H."/>
            <person name="Sugawara M."/>
            <person name="Takahashi M."/>
            <person name="Kanda K."/>
            <person name="Yokoi T."/>
            <person name="Furuya T."/>
            <person name="Kikkawa E."/>
            <person name="Omura Y."/>
            <person name="Abe K."/>
            <person name="Kamihara K."/>
            <person name="Katsuta N."/>
            <person name="Sato K."/>
            <person name="Tanikawa M."/>
            <person name="Yamazaki M."/>
            <person name="Ninomiya K."/>
            <person name="Ishibashi T."/>
            <person name="Yamashita H."/>
            <person name="Murakawa K."/>
            <person name="Fujimori K."/>
            <person name="Tanai H."/>
            <person name="Kimata M."/>
            <person name="Watanabe M."/>
            <person name="Hiraoka S."/>
            <person name="Chiba Y."/>
            <person name="Ishida S."/>
            <person name="Ono Y."/>
            <person name="Takiguchi S."/>
            <person name="Watanabe S."/>
            <person name="Yosida M."/>
            <person name="Hotuta T."/>
            <person name="Kusano J."/>
            <person name="Kanehori K."/>
            <person name="Takahashi-Fujii A."/>
            <person name="Hara H."/>
            <person name="Tanase T.-O."/>
            <person name="Nomura Y."/>
            <person name="Togiya S."/>
            <person name="Komai F."/>
            <person name="Hara R."/>
            <person name="Takeuchi K."/>
            <person name="Arita M."/>
            <person name="Imose N."/>
            <person name="Musashino K."/>
            <person name="Yuuki H."/>
            <person name="Oshima A."/>
            <person name="Sasaki N."/>
            <person name="Aotsuka S."/>
            <person name="Yoshikawa Y."/>
            <person name="Matsunawa H."/>
            <person name="Ichihara T."/>
            <person name="Shiohata N."/>
            <person name="Sano S."/>
            <person name="Moriya S."/>
            <person name="Momiyama H."/>
            <person name="Satoh N."/>
            <person name="Takami S."/>
            <person name="Terashima Y."/>
            <person name="Suzuki O."/>
            <person name="Nakagawa S."/>
            <person name="Senoh A."/>
            <person name="Mizoguchi H."/>
            <person name="Goto Y."/>
            <person name="Shimizu F."/>
            <person name="Wakebe H."/>
            <person name="Hishigaki H."/>
            <person name="Watanabe T."/>
            <person name="Sugiyama A."/>
            <person name="Takemoto M."/>
            <person name="Kawakami B."/>
            <person name="Yamazaki M."/>
            <person name="Watanabe K."/>
            <person name="Kumagai A."/>
            <person name="Itakura S."/>
            <person name="Fukuzumi Y."/>
            <person name="Fujimori Y."/>
            <person name="Komiyama M."/>
            <person name="Tashiro H."/>
            <person name="Tanigami A."/>
            <person name="Fujiwara T."/>
            <person name="Ono T."/>
            <person name="Yamada K."/>
            <person name="Fujii Y."/>
            <person name="Ozaki K."/>
            <person name="Hirao M."/>
            <person name="Ohmori Y."/>
            <person name="Kawabata A."/>
            <person name="Hikiji T."/>
            <person name="Kobatake N."/>
            <person name="Inagaki H."/>
            <person name="Ikema Y."/>
            <person name="Okamoto S."/>
            <person name="Okitani R."/>
            <person name="Kawakami T."/>
            <person name="Noguchi S."/>
            <person name="Itoh T."/>
            <person name="Shigeta K."/>
            <person name="Senba T."/>
            <person name="Matsumura K."/>
            <person name="Nakajima Y."/>
            <person name="Mizuno T."/>
            <person name="Morinaga M."/>
            <person name="Sasaki M."/>
            <person name="Togashi T."/>
            <person name="Oyama M."/>
            <person name="Hata H."/>
            <person name="Watanabe M."/>
            <person name="Komatsu T."/>
            <person name="Mizushima-Sugano J."/>
            <person name="Satoh T."/>
            <person name="Shirai Y."/>
            <person name="Takahashi Y."/>
            <person name="Nakagawa K."/>
            <person name="Okumura K."/>
            <person name="Nagase T."/>
            <person name="Nomura N."/>
            <person name="Kikuchi H."/>
            <person name="Masuho Y."/>
            <person name="Yamashita R."/>
            <person name="Nakai K."/>
            <person name="Yada T."/>
            <person name="Nakamura Y."/>
            <person name="Ohara O."/>
            <person name="Isogai T."/>
            <person name="Sugano S."/>
        </authorList>
    </citation>
    <scope>NUCLEOTIDE SEQUENCE [LARGE SCALE MRNA]</scope>
    <source>
        <tissue>Brain</tissue>
    </source>
</reference>
<reference key="2">
    <citation type="journal article" date="2000" name="Nature">
        <title>The DNA sequence of human chromosome 21.</title>
        <authorList>
            <person name="Hattori M."/>
            <person name="Fujiyama A."/>
            <person name="Taylor T.D."/>
            <person name="Watanabe H."/>
            <person name="Yada T."/>
            <person name="Park H.-S."/>
            <person name="Toyoda A."/>
            <person name="Ishii K."/>
            <person name="Totoki Y."/>
            <person name="Choi D.-K."/>
            <person name="Groner Y."/>
            <person name="Soeda E."/>
            <person name="Ohki M."/>
            <person name="Takagi T."/>
            <person name="Sakaki Y."/>
            <person name="Taudien S."/>
            <person name="Blechschmidt K."/>
            <person name="Polley A."/>
            <person name="Menzel U."/>
            <person name="Delabar J."/>
            <person name="Kumpf K."/>
            <person name="Lehmann R."/>
            <person name="Patterson D."/>
            <person name="Reichwald K."/>
            <person name="Rump A."/>
            <person name="Schillhabel M."/>
            <person name="Schudy A."/>
            <person name="Zimmermann W."/>
            <person name="Rosenthal A."/>
            <person name="Kudoh J."/>
            <person name="Shibuya K."/>
            <person name="Kawasaki K."/>
            <person name="Asakawa S."/>
            <person name="Shintani A."/>
            <person name="Sasaki T."/>
            <person name="Nagamine K."/>
            <person name="Mitsuyama S."/>
            <person name="Antonarakis S.E."/>
            <person name="Minoshima S."/>
            <person name="Shimizu N."/>
            <person name="Nordsiek G."/>
            <person name="Hornischer K."/>
            <person name="Brandt P."/>
            <person name="Scharfe M."/>
            <person name="Schoen O."/>
            <person name="Desario A."/>
            <person name="Reichelt J."/>
            <person name="Kauer G."/>
            <person name="Bloecker H."/>
            <person name="Ramser J."/>
            <person name="Beck A."/>
            <person name="Klages S."/>
            <person name="Hennig S."/>
            <person name="Riesselmann L."/>
            <person name="Dagand E."/>
            <person name="Wehrmeyer S."/>
            <person name="Borzym K."/>
            <person name="Gardiner K."/>
            <person name="Nizetic D."/>
            <person name="Francis F."/>
            <person name="Lehrach H."/>
            <person name="Reinhardt R."/>
            <person name="Yaspo M.-L."/>
        </authorList>
    </citation>
    <scope>NUCLEOTIDE SEQUENCE [LARGE SCALE GENOMIC DNA]</scope>
</reference>
<dbReference type="EMBL" id="AK131425">
    <property type="protein sequence ID" value="BAD18572.1"/>
    <property type="molecule type" value="mRNA"/>
</dbReference>
<dbReference type="EMBL" id="AP001046">
    <property type="status" value="NOT_ANNOTATED_CDS"/>
    <property type="molecule type" value="Genomic_DNA"/>
</dbReference>
<dbReference type="GlyGen" id="Q6ZN03">
    <property type="glycosylation" value="1 site, 1 O-linked glycan (1 site)"/>
</dbReference>
<dbReference type="iPTMnet" id="Q6ZN03"/>
<dbReference type="BioMuta" id="HGNC:33698"/>
<dbReference type="ProteomicsDB" id="67949"/>
<dbReference type="AGR" id="HGNC:33698"/>
<dbReference type="GeneCards" id="LINC00322"/>
<dbReference type="HGNC" id="HGNC:33698">
    <property type="gene designation" value="LINC00322"/>
</dbReference>
<dbReference type="neXtProt" id="NX_Q6ZN03"/>
<dbReference type="InParanoid" id="Q6ZN03"/>
<dbReference type="PAN-GO" id="Q6ZN03">
    <property type="GO annotations" value="0 GO annotations based on evolutionary models"/>
</dbReference>
<dbReference type="Pharos" id="Q6ZN03">
    <property type="development level" value="Tdark"/>
</dbReference>
<dbReference type="PRO" id="PR:Q6ZN03"/>
<dbReference type="Proteomes" id="UP000005640">
    <property type="component" value="Unplaced"/>
</dbReference>
<dbReference type="RNAct" id="Q6ZN03">
    <property type="molecule type" value="protein"/>
</dbReference>
<gene>
    <name type="primary">LINC00322</name>
    <name type="synonym">C21orf136</name>
    <name type="synonym">NCRNA00322</name>
</gene>
<protein>
    <recommendedName>
        <fullName>Putative uncharacterized protein encoded by LINC00322</fullName>
    </recommendedName>
</protein>
<accession>Q6ZN03</accession>
<proteinExistence type="uncertain"/>
<keyword id="KW-1185">Reference proteome</keyword>
<evidence type="ECO:0000256" key="1">
    <source>
        <dbReference type="SAM" id="MobiDB-lite"/>
    </source>
</evidence>
<evidence type="ECO:0000305" key="2"/>
<comment type="caution">
    <text evidence="2">Product of a dubious CDS prediction. May be a non-coding RNA.</text>
</comment>